<dbReference type="EMBL" id="AY724814">
    <property type="protein sequence ID" value="AAU21053.1"/>
    <property type="molecule type" value="Genomic_DNA"/>
</dbReference>
<dbReference type="GlyCosmos" id="Q646G6">
    <property type="glycosylation" value="1 site, No reported glycans"/>
</dbReference>
<dbReference type="GO" id="GO:0005886">
    <property type="term" value="C:plasma membrane"/>
    <property type="evidence" value="ECO:0007669"/>
    <property type="project" value="UniProtKB-ARBA"/>
</dbReference>
<dbReference type="GO" id="GO:0033038">
    <property type="term" value="F:bitter taste receptor activity"/>
    <property type="evidence" value="ECO:0007669"/>
    <property type="project" value="InterPro"/>
</dbReference>
<dbReference type="GO" id="GO:0004930">
    <property type="term" value="F:G protein-coupled receptor activity"/>
    <property type="evidence" value="ECO:0007669"/>
    <property type="project" value="UniProtKB-KW"/>
</dbReference>
<dbReference type="CDD" id="cd15016">
    <property type="entry name" value="7tm_TAS2R1"/>
    <property type="match status" value="1"/>
</dbReference>
<dbReference type="FunFam" id="1.20.1070.10:FF:000055">
    <property type="entry name" value="Taste receptor type 2"/>
    <property type="match status" value="1"/>
</dbReference>
<dbReference type="Gene3D" id="1.20.1070.10">
    <property type="entry name" value="Rhodopsin 7-helix transmembrane proteins"/>
    <property type="match status" value="1"/>
</dbReference>
<dbReference type="InterPro" id="IPR007960">
    <property type="entry name" value="TAS2R"/>
</dbReference>
<dbReference type="PANTHER" id="PTHR11394">
    <property type="entry name" value="TASTE RECEPTOR TYPE 2"/>
    <property type="match status" value="1"/>
</dbReference>
<dbReference type="PANTHER" id="PTHR11394:SF149">
    <property type="entry name" value="TASTE RECEPTOR TYPE 2 MEMBER 1"/>
    <property type="match status" value="1"/>
</dbReference>
<dbReference type="Pfam" id="PF05296">
    <property type="entry name" value="TAS2R"/>
    <property type="match status" value="1"/>
</dbReference>
<dbReference type="SUPFAM" id="SSF81321">
    <property type="entry name" value="Family A G protein-coupled receptor-like"/>
    <property type="match status" value="1"/>
</dbReference>
<accession>Q646G6</accession>
<reference key="1">
    <citation type="journal article" date="2005" name="Mol. Biol. Evol.">
        <title>Evolution of bitter taste receptors in humans and apes.</title>
        <authorList>
            <person name="Fischer A."/>
            <person name="Gilad Y."/>
            <person name="Man O."/>
            <person name="Paeaebo S."/>
        </authorList>
    </citation>
    <scope>NUCLEOTIDE SEQUENCE [GENOMIC DNA]</scope>
</reference>
<sequence length="299" mass="34069">MLESHLIIHFLLAVIQFLLGTFTNGIIVVVNGIDLIKHRKMAPLDLLLSCLAVSRIFLQLFIFYVNVIVIFFIEFIMCSENCAILLFINELELWLATWLGVFYCAKVASVPHPLFIWLKMKISKLVPWMILGSLLYVSMTCVFHSKYAGFMVPYFLRNFFSQNATIQKEDTPAIQIFSFVAEFLVPLLIFLVAVLLLIFSLGRHTRQMRNTVAGSRVPGRGAPISALLSILSFVILYFSHCMIKVFLSSLKFHVRSFILPFFILVIGIYPSGHSLILILGNXKLKQNAKKFLLHSKCCQ</sequence>
<gene>
    <name type="primary">TAS2R1</name>
</gene>
<name>TA2R1_PONPY</name>
<comment type="function">
    <text evidence="1">Receptor that may play a role in the perception of bitterness and is gustducin-linked. May play a role in sensing the chemical composition of the gastrointestinal content. The activity of this receptor may stimulate alpha gustducin, mediate PLC-beta-2 activation and lead to the gating of TRPM5 (By similarity).</text>
</comment>
<comment type="subcellular location">
    <subcellularLocation>
        <location>Membrane</location>
        <topology>Multi-pass membrane protein</topology>
    </subcellularLocation>
</comment>
<comment type="miscellaneous">
    <text>Most taste cells may be activated by a limited number of bitter compounds; individual taste cells can discriminate among bitter stimuli.</text>
</comment>
<comment type="similarity">
    <text evidence="3">Belongs to the G-protein coupled receptor T2R family.</text>
</comment>
<feature type="chain" id="PRO_0000082191" description="Taste receptor type 2 member 1">
    <location>
        <begin position="1"/>
        <end position="299"/>
    </location>
</feature>
<feature type="topological domain" description="Extracellular" evidence="2">
    <location>
        <begin position="1"/>
        <end position="9"/>
    </location>
</feature>
<feature type="transmembrane region" description="Helical; Name=1" evidence="2">
    <location>
        <begin position="10"/>
        <end position="30"/>
    </location>
</feature>
<feature type="topological domain" description="Cytoplasmic" evidence="2">
    <location>
        <begin position="31"/>
        <end position="55"/>
    </location>
</feature>
<feature type="transmembrane region" description="Helical; Name=2" evidence="2">
    <location>
        <begin position="56"/>
        <end position="76"/>
    </location>
</feature>
<feature type="topological domain" description="Extracellular" evidence="2">
    <location>
        <begin position="77"/>
        <end position="81"/>
    </location>
</feature>
<feature type="transmembrane region" description="Helical; Name=3" evidence="2">
    <location>
        <begin position="82"/>
        <end position="102"/>
    </location>
</feature>
<feature type="topological domain" description="Cytoplasmic" evidence="2">
    <location>
        <begin position="103"/>
        <end position="124"/>
    </location>
</feature>
<feature type="transmembrane region" description="Helical; Name=4" evidence="2">
    <location>
        <begin position="125"/>
        <end position="145"/>
    </location>
</feature>
<feature type="topological domain" description="Extracellular" evidence="2">
    <location>
        <begin position="146"/>
        <end position="178"/>
    </location>
</feature>
<feature type="transmembrane region" description="Helical; Name=5" evidence="2">
    <location>
        <begin position="179"/>
        <end position="199"/>
    </location>
</feature>
<feature type="topological domain" description="Cytoplasmic" evidence="2">
    <location>
        <begin position="200"/>
        <end position="222"/>
    </location>
</feature>
<feature type="transmembrane region" description="Helical; Name=6" evidence="2">
    <location>
        <begin position="223"/>
        <end position="243"/>
    </location>
</feature>
<feature type="topological domain" description="Extracellular" evidence="2">
    <location>
        <begin position="244"/>
        <end position="257"/>
    </location>
</feature>
<feature type="transmembrane region" description="Helical; Name=7" evidence="2">
    <location>
        <begin position="258"/>
        <end position="278"/>
    </location>
</feature>
<feature type="topological domain" description="Cytoplasmic" evidence="2">
    <location>
        <begin position="279"/>
        <end position="299"/>
    </location>
</feature>
<feature type="glycosylation site" description="N-linked (GlcNAc...) asparagine" evidence="2">
    <location>
        <position position="163"/>
    </location>
</feature>
<organism>
    <name type="scientific">Pongo pygmaeus</name>
    <name type="common">Bornean orangutan</name>
    <dbReference type="NCBI Taxonomy" id="9600"/>
    <lineage>
        <taxon>Eukaryota</taxon>
        <taxon>Metazoa</taxon>
        <taxon>Chordata</taxon>
        <taxon>Craniata</taxon>
        <taxon>Vertebrata</taxon>
        <taxon>Euteleostomi</taxon>
        <taxon>Mammalia</taxon>
        <taxon>Eutheria</taxon>
        <taxon>Euarchontoglires</taxon>
        <taxon>Primates</taxon>
        <taxon>Haplorrhini</taxon>
        <taxon>Catarrhini</taxon>
        <taxon>Hominidae</taxon>
        <taxon>Pongo</taxon>
    </lineage>
</organism>
<keyword id="KW-0297">G-protein coupled receptor</keyword>
<keyword id="KW-0325">Glycoprotein</keyword>
<keyword id="KW-0472">Membrane</keyword>
<keyword id="KW-0675">Receptor</keyword>
<keyword id="KW-0716">Sensory transduction</keyword>
<keyword id="KW-0919">Taste</keyword>
<keyword id="KW-0807">Transducer</keyword>
<keyword id="KW-0812">Transmembrane</keyword>
<keyword id="KW-1133">Transmembrane helix</keyword>
<evidence type="ECO:0000250" key="1"/>
<evidence type="ECO:0000255" key="2"/>
<evidence type="ECO:0000305" key="3"/>
<proteinExistence type="inferred from homology"/>
<protein>
    <recommendedName>
        <fullName>Taste receptor type 2 member 1</fullName>
        <shortName>T2R1</shortName>
    </recommendedName>
</protein>